<reference key="1">
    <citation type="journal article" date="1998" name="Mol. Genet. Metab.">
        <title>Murine alpha-N-acetylgalactosaminidase: isolation and expression of a full-length cDNA and genomic organization: further evidence of an alpha-galactosidase gene family.</title>
        <authorList>
            <person name="Wang A.M."/>
            <person name="Ioannou Y.A."/>
            <person name="Zeidner K.M."/>
            <person name="Desnick R.J."/>
        </authorList>
    </citation>
    <scope>NUCLEOTIDE SEQUENCE [MRNA]</scope>
</reference>
<reference key="2">
    <citation type="journal article" date="1998" name="Gene">
        <title>Molecular cloning, structural organization, sequence, chromosomal assignment, and expression of the mouse alpha-N-acetylgalactosaminidase gene.</title>
        <authorList>
            <person name="Herrmann T."/>
            <person name="Schindler D."/>
            <person name="Tabe H."/>
            <person name="Onodera O."/>
            <person name="Igarashi S."/>
            <person name="Polack A."/>
            <person name="Zehnpfennig D."/>
            <person name="Tsuji S."/>
        </authorList>
    </citation>
    <scope>NUCLEOTIDE SEQUENCE [GENOMIC DNA]</scope>
    <source>
        <strain>129/Sv</strain>
        <tissue>Liver</tissue>
    </source>
</reference>
<reference key="3">
    <citation type="journal article" date="2001" name="Mamm. Genome">
        <title>High-throughput sequence identification of gene coding variants within alcohol-related QTLs.</title>
        <authorList>
            <person name="Ehringer M.A."/>
            <person name="Thompson J."/>
            <person name="Conroy O."/>
            <person name="Xu Y."/>
            <person name="Yang F."/>
            <person name="Canniff J."/>
            <person name="Beeson M."/>
            <person name="Gordon L."/>
            <person name="Bennett B."/>
            <person name="Johnson T.E."/>
            <person name="Sikela J.M."/>
        </authorList>
    </citation>
    <scope>NUCLEOTIDE SEQUENCE [GENOMIC DNA]</scope>
    <source>
        <strain>ILS</strain>
        <strain>ISS</strain>
    </source>
</reference>
<reference key="4">
    <citation type="journal article" date="2005" name="Science">
        <title>The transcriptional landscape of the mammalian genome.</title>
        <authorList>
            <person name="Carninci P."/>
            <person name="Kasukawa T."/>
            <person name="Katayama S."/>
            <person name="Gough J."/>
            <person name="Frith M.C."/>
            <person name="Maeda N."/>
            <person name="Oyama R."/>
            <person name="Ravasi T."/>
            <person name="Lenhard B."/>
            <person name="Wells C."/>
            <person name="Kodzius R."/>
            <person name="Shimokawa K."/>
            <person name="Bajic V.B."/>
            <person name="Brenner S.E."/>
            <person name="Batalov S."/>
            <person name="Forrest A.R."/>
            <person name="Zavolan M."/>
            <person name="Davis M.J."/>
            <person name="Wilming L.G."/>
            <person name="Aidinis V."/>
            <person name="Allen J.E."/>
            <person name="Ambesi-Impiombato A."/>
            <person name="Apweiler R."/>
            <person name="Aturaliya R.N."/>
            <person name="Bailey T.L."/>
            <person name="Bansal M."/>
            <person name="Baxter L."/>
            <person name="Beisel K.W."/>
            <person name="Bersano T."/>
            <person name="Bono H."/>
            <person name="Chalk A.M."/>
            <person name="Chiu K.P."/>
            <person name="Choudhary V."/>
            <person name="Christoffels A."/>
            <person name="Clutterbuck D.R."/>
            <person name="Crowe M.L."/>
            <person name="Dalla E."/>
            <person name="Dalrymple B.P."/>
            <person name="de Bono B."/>
            <person name="Della Gatta G."/>
            <person name="di Bernardo D."/>
            <person name="Down T."/>
            <person name="Engstrom P."/>
            <person name="Fagiolini M."/>
            <person name="Faulkner G."/>
            <person name="Fletcher C.F."/>
            <person name="Fukushima T."/>
            <person name="Furuno M."/>
            <person name="Futaki S."/>
            <person name="Gariboldi M."/>
            <person name="Georgii-Hemming P."/>
            <person name="Gingeras T.R."/>
            <person name="Gojobori T."/>
            <person name="Green R.E."/>
            <person name="Gustincich S."/>
            <person name="Harbers M."/>
            <person name="Hayashi Y."/>
            <person name="Hensch T.K."/>
            <person name="Hirokawa N."/>
            <person name="Hill D."/>
            <person name="Huminiecki L."/>
            <person name="Iacono M."/>
            <person name="Ikeo K."/>
            <person name="Iwama A."/>
            <person name="Ishikawa T."/>
            <person name="Jakt M."/>
            <person name="Kanapin A."/>
            <person name="Katoh M."/>
            <person name="Kawasawa Y."/>
            <person name="Kelso J."/>
            <person name="Kitamura H."/>
            <person name="Kitano H."/>
            <person name="Kollias G."/>
            <person name="Krishnan S.P."/>
            <person name="Kruger A."/>
            <person name="Kummerfeld S.K."/>
            <person name="Kurochkin I.V."/>
            <person name="Lareau L.F."/>
            <person name="Lazarevic D."/>
            <person name="Lipovich L."/>
            <person name="Liu J."/>
            <person name="Liuni S."/>
            <person name="McWilliam S."/>
            <person name="Madan Babu M."/>
            <person name="Madera M."/>
            <person name="Marchionni L."/>
            <person name="Matsuda H."/>
            <person name="Matsuzawa S."/>
            <person name="Miki H."/>
            <person name="Mignone F."/>
            <person name="Miyake S."/>
            <person name="Morris K."/>
            <person name="Mottagui-Tabar S."/>
            <person name="Mulder N."/>
            <person name="Nakano N."/>
            <person name="Nakauchi H."/>
            <person name="Ng P."/>
            <person name="Nilsson R."/>
            <person name="Nishiguchi S."/>
            <person name="Nishikawa S."/>
            <person name="Nori F."/>
            <person name="Ohara O."/>
            <person name="Okazaki Y."/>
            <person name="Orlando V."/>
            <person name="Pang K.C."/>
            <person name="Pavan W.J."/>
            <person name="Pavesi G."/>
            <person name="Pesole G."/>
            <person name="Petrovsky N."/>
            <person name="Piazza S."/>
            <person name="Reed J."/>
            <person name="Reid J.F."/>
            <person name="Ring B.Z."/>
            <person name="Ringwald M."/>
            <person name="Rost B."/>
            <person name="Ruan Y."/>
            <person name="Salzberg S.L."/>
            <person name="Sandelin A."/>
            <person name="Schneider C."/>
            <person name="Schoenbach C."/>
            <person name="Sekiguchi K."/>
            <person name="Semple C.A."/>
            <person name="Seno S."/>
            <person name="Sessa L."/>
            <person name="Sheng Y."/>
            <person name="Shibata Y."/>
            <person name="Shimada H."/>
            <person name="Shimada K."/>
            <person name="Silva D."/>
            <person name="Sinclair B."/>
            <person name="Sperling S."/>
            <person name="Stupka E."/>
            <person name="Sugiura K."/>
            <person name="Sultana R."/>
            <person name="Takenaka Y."/>
            <person name="Taki K."/>
            <person name="Tammoja K."/>
            <person name="Tan S.L."/>
            <person name="Tang S."/>
            <person name="Taylor M.S."/>
            <person name="Tegner J."/>
            <person name="Teichmann S.A."/>
            <person name="Ueda H.R."/>
            <person name="van Nimwegen E."/>
            <person name="Verardo R."/>
            <person name="Wei C.L."/>
            <person name="Yagi K."/>
            <person name="Yamanishi H."/>
            <person name="Zabarovsky E."/>
            <person name="Zhu S."/>
            <person name="Zimmer A."/>
            <person name="Hide W."/>
            <person name="Bult C."/>
            <person name="Grimmond S.M."/>
            <person name="Teasdale R.D."/>
            <person name="Liu E.T."/>
            <person name="Brusic V."/>
            <person name="Quackenbush J."/>
            <person name="Wahlestedt C."/>
            <person name="Mattick J.S."/>
            <person name="Hume D.A."/>
            <person name="Kai C."/>
            <person name="Sasaki D."/>
            <person name="Tomaru Y."/>
            <person name="Fukuda S."/>
            <person name="Kanamori-Katayama M."/>
            <person name="Suzuki M."/>
            <person name="Aoki J."/>
            <person name="Arakawa T."/>
            <person name="Iida J."/>
            <person name="Imamura K."/>
            <person name="Itoh M."/>
            <person name="Kato T."/>
            <person name="Kawaji H."/>
            <person name="Kawagashira N."/>
            <person name="Kawashima T."/>
            <person name="Kojima M."/>
            <person name="Kondo S."/>
            <person name="Konno H."/>
            <person name="Nakano K."/>
            <person name="Ninomiya N."/>
            <person name="Nishio T."/>
            <person name="Okada M."/>
            <person name="Plessy C."/>
            <person name="Shibata K."/>
            <person name="Shiraki T."/>
            <person name="Suzuki S."/>
            <person name="Tagami M."/>
            <person name="Waki K."/>
            <person name="Watahiki A."/>
            <person name="Okamura-Oho Y."/>
            <person name="Suzuki H."/>
            <person name="Kawai J."/>
            <person name="Hayashizaki Y."/>
        </authorList>
    </citation>
    <scope>NUCLEOTIDE SEQUENCE [LARGE SCALE MRNA]</scope>
    <source>
        <strain>C57BL/6J</strain>
        <tissue>Testis</tissue>
    </source>
</reference>
<reference key="5">
    <citation type="journal article" date="2004" name="Genome Res.">
        <title>The status, quality, and expansion of the NIH full-length cDNA project: the Mammalian Gene Collection (MGC).</title>
        <authorList>
            <consortium name="The MGC Project Team"/>
        </authorList>
    </citation>
    <scope>NUCLEOTIDE SEQUENCE [LARGE SCALE MRNA]</scope>
    <source>
        <strain>Czech II</strain>
        <tissue>Mammary tumor</tissue>
    </source>
</reference>
<reference key="6">
    <citation type="journal article" date="2010" name="Cell">
        <title>A tissue-specific atlas of mouse protein phosphorylation and expression.</title>
        <authorList>
            <person name="Huttlin E.L."/>
            <person name="Jedrychowski M.P."/>
            <person name="Elias J.E."/>
            <person name="Goswami T."/>
            <person name="Rad R."/>
            <person name="Beausoleil S.A."/>
            <person name="Villen J."/>
            <person name="Haas W."/>
            <person name="Sowa M.E."/>
            <person name="Gygi S.P."/>
        </authorList>
    </citation>
    <scope>IDENTIFICATION BY MASS SPECTROMETRY [LARGE SCALE ANALYSIS]</scope>
    <source>
        <tissue>Brain</tissue>
        <tissue>Kidney</tissue>
        <tissue>Liver</tissue>
        <tissue>Lung</tissue>
        <tissue>Pancreas</tissue>
        <tissue>Spleen</tissue>
    </source>
</reference>
<accession>Q9QWR8</accession>
<accession>O88620</accession>
<accession>Q8R437</accession>
<accession>Q8VDK2</accession>
<protein>
    <recommendedName>
        <fullName>Alpha-N-acetylgalactosaminidase</fullName>
        <ecNumber>3.2.1.49</ecNumber>
    </recommendedName>
    <alternativeName>
        <fullName>Alpha-galactosidase B</fullName>
    </alternativeName>
</protein>
<sequence>MLQKTVLLLALVAQVLMLENGLLRTPPMGWLAWERFRCNIDCVEDPKNCISERLFMEMADRLAQDGWRDLGYVYLNIDDCWIGGRDASGRLIPDPKRFPHGIAFLADYAHSLGLKLGIYEDMGKMTCMGYPGTTLDKVELDAETFAEWKVDMLKLDGCFSSSRERAEGYPKMAAALNATGRPIAFSCSWPAYEGGLPPKVNYTEVSRVCNLWRNYKDIQDSWKSVLSILDWFVRHQDVLQPVAGPGHWNDPDMLLIGNFGLSFDESRAQMALWTVLAAPLLMSTDLRTISPQNMDILQNPLMIKINQDPLGIQGRRILKSKSHIEVFKRYLSNQASALVFFSRRTDMPFRFHCSLLELNYPKGRVYEGQNVFTGDIFSGLQTEVNFTVIINPSGVVMWYLYPIKDLGISTMMSHW</sequence>
<name>NAGAB_MOUSE</name>
<organism>
    <name type="scientific">Mus musculus</name>
    <name type="common">Mouse</name>
    <dbReference type="NCBI Taxonomy" id="10090"/>
    <lineage>
        <taxon>Eukaryota</taxon>
        <taxon>Metazoa</taxon>
        <taxon>Chordata</taxon>
        <taxon>Craniata</taxon>
        <taxon>Vertebrata</taxon>
        <taxon>Euteleostomi</taxon>
        <taxon>Mammalia</taxon>
        <taxon>Eutheria</taxon>
        <taxon>Euarchontoglires</taxon>
        <taxon>Glires</taxon>
        <taxon>Rodentia</taxon>
        <taxon>Myomorpha</taxon>
        <taxon>Muroidea</taxon>
        <taxon>Muridae</taxon>
        <taxon>Murinae</taxon>
        <taxon>Mus</taxon>
        <taxon>Mus</taxon>
    </lineage>
</organism>
<keyword id="KW-1015">Disulfide bond</keyword>
<keyword id="KW-0325">Glycoprotein</keyword>
<keyword id="KW-0326">Glycosidase</keyword>
<keyword id="KW-0378">Hydrolase</keyword>
<keyword id="KW-0443">Lipid metabolism</keyword>
<keyword id="KW-0458">Lysosome</keyword>
<keyword id="KW-0597">Phosphoprotein</keyword>
<keyword id="KW-1185">Reference proteome</keyword>
<keyword id="KW-0732">Signal</keyword>
<gene>
    <name type="primary">Naga</name>
</gene>
<dbReference type="EC" id="3.2.1.49"/>
<dbReference type="EMBL" id="AF079458">
    <property type="protein sequence ID" value="AAC28851.1"/>
    <property type="molecule type" value="mRNA"/>
</dbReference>
<dbReference type="EMBL" id="AJ223966">
    <property type="protein sequence ID" value="CAA11703.1"/>
    <property type="molecule type" value="Genomic_DNA"/>
</dbReference>
<dbReference type="EMBL" id="AY079439">
    <property type="protein sequence ID" value="AAL87527.1"/>
    <property type="status" value="ALT_INIT"/>
    <property type="molecule type" value="Genomic_DNA"/>
</dbReference>
<dbReference type="EMBL" id="AY079440">
    <property type="protein sequence ID" value="AAL87528.1"/>
    <property type="molecule type" value="Genomic_DNA"/>
</dbReference>
<dbReference type="EMBL" id="AK077116">
    <property type="protein sequence ID" value="BAC36620.1"/>
    <property type="molecule type" value="mRNA"/>
</dbReference>
<dbReference type="EMBL" id="BC021631">
    <property type="protein sequence ID" value="AAH21631.1"/>
    <property type="molecule type" value="mRNA"/>
</dbReference>
<dbReference type="CCDS" id="CCDS27686.1"/>
<dbReference type="RefSeq" id="NP_032695.3">
    <property type="nucleotide sequence ID" value="NM_008669.4"/>
</dbReference>
<dbReference type="SMR" id="Q9QWR8"/>
<dbReference type="BioGRID" id="201683">
    <property type="interactions" value="1"/>
</dbReference>
<dbReference type="FunCoup" id="Q9QWR8">
    <property type="interactions" value="1091"/>
</dbReference>
<dbReference type="IntAct" id="Q9QWR8">
    <property type="interactions" value="1"/>
</dbReference>
<dbReference type="MINT" id="Q9QWR8"/>
<dbReference type="STRING" id="10090.ENSMUSP00000023088"/>
<dbReference type="CAZy" id="GH27">
    <property type="family name" value="Glycoside Hydrolase Family 27"/>
</dbReference>
<dbReference type="GlyConnect" id="2123">
    <property type="glycosylation" value="1 N-Linked glycan (1 site)"/>
</dbReference>
<dbReference type="GlyCosmos" id="Q9QWR8">
    <property type="glycosylation" value="3 sites, 1 glycan"/>
</dbReference>
<dbReference type="GlyGen" id="Q9QWR8">
    <property type="glycosylation" value="4 sites, 3 N-linked glycans (2 sites), 1 O-linked glycan (1 site)"/>
</dbReference>
<dbReference type="iPTMnet" id="Q9QWR8"/>
<dbReference type="PhosphoSitePlus" id="Q9QWR8"/>
<dbReference type="SwissPalm" id="Q9QWR8"/>
<dbReference type="jPOST" id="Q9QWR8"/>
<dbReference type="PaxDb" id="10090-ENSMUSP00000023088"/>
<dbReference type="ProteomicsDB" id="252760"/>
<dbReference type="Pumba" id="Q9QWR8"/>
<dbReference type="Antibodypedia" id="275">
    <property type="antibodies" value="185 antibodies from 23 providers"/>
</dbReference>
<dbReference type="DNASU" id="17939"/>
<dbReference type="Ensembl" id="ENSMUST00000023088.8">
    <property type="protein sequence ID" value="ENSMUSP00000023088.8"/>
    <property type="gene ID" value="ENSMUSG00000022453.9"/>
</dbReference>
<dbReference type="GeneID" id="17939"/>
<dbReference type="KEGG" id="mmu:17939"/>
<dbReference type="UCSC" id="uc007wyw.2">
    <property type="organism name" value="mouse"/>
</dbReference>
<dbReference type="AGR" id="MGI:1261422"/>
<dbReference type="CTD" id="4668"/>
<dbReference type="MGI" id="MGI:1261422">
    <property type="gene designation" value="Naga"/>
</dbReference>
<dbReference type="VEuPathDB" id="HostDB:ENSMUSG00000022453"/>
<dbReference type="eggNOG" id="KOG2366">
    <property type="taxonomic scope" value="Eukaryota"/>
</dbReference>
<dbReference type="GeneTree" id="ENSGT00390000008751"/>
<dbReference type="HOGENOM" id="CLU_013093_0_0_1"/>
<dbReference type="InParanoid" id="Q9QWR8"/>
<dbReference type="OMA" id="DRYPPMR"/>
<dbReference type="OrthoDB" id="5795902at2759"/>
<dbReference type="PhylomeDB" id="Q9QWR8"/>
<dbReference type="TreeFam" id="TF312909"/>
<dbReference type="BRENDA" id="3.2.1.49">
    <property type="organism ID" value="3474"/>
</dbReference>
<dbReference type="BioGRID-ORCS" id="17939">
    <property type="hits" value="1 hit in 80 CRISPR screens"/>
</dbReference>
<dbReference type="ChiTaRS" id="Naga">
    <property type="organism name" value="mouse"/>
</dbReference>
<dbReference type="PRO" id="PR:Q9QWR8"/>
<dbReference type="Proteomes" id="UP000000589">
    <property type="component" value="Chromosome 15"/>
</dbReference>
<dbReference type="RNAct" id="Q9QWR8">
    <property type="molecule type" value="protein"/>
</dbReference>
<dbReference type="Bgee" id="ENSMUSG00000022453">
    <property type="expression patterns" value="Expressed in islet of Langerhans and 243 other cell types or tissues"/>
</dbReference>
<dbReference type="ExpressionAtlas" id="Q9QWR8">
    <property type="expression patterns" value="baseline and differential"/>
</dbReference>
<dbReference type="GO" id="GO:0005764">
    <property type="term" value="C:lysosome"/>
    <property type="evidence" value="ECO:0007669"/>
    <property type="project" value="UniProtKB-SubCell"/>
</dbReference>
<dbReference type="GO" id="GO:0016020">
    <property type="term" value="C:membrane"/>
    <property type="evidence" value="ECO:0007669"/>
    <property type="project" value="GOC"/>
</dbReference>
<dbReference type="GO" id="GO:0008456">
    <property type="term" value="F:alpha-N-acetylgalactosaminidase activity"/>
    <property type="evidence" value="ECO:0000250"/>
    <property type="project" value="UniProtKB"/>
</dbReference>
<dbReference type="GO" id="GO:0042803">
    <property type="term" value="F:protein homodimerization activity"/>
    <property type="evidence" value="ECO:0007669"/>
    <property type="project" value="Ensembl"/>
</dbReference>
<dbReference type="GO" id="GO:0016052">
    <property type="term" value="P:carbohydrate catabolic process"/>
    <property type="evidence" value="ECO:0000250"/>
    <property type="project" value="UniProtKB"/>
</dbReference>
<dbReference type="GO" id="GO:0019377">
    <property type="term" value="P:glycolipid catabolic process"/>
    <property type="evidence" value="ECO:0000250"/>
    <property type="project" value="UniProtKB"/>
</dbReference>
<dbReference type="CDD" id="cd14792">
    <property type="entry name" value="GH27"/>
    <property type="match status" value="1"/>
</dbReference>
<dbReference type="FunFam" id="2.60.40.1180:FF:000025">
    <property type="entry name" value="Alpha-galactosidase"/>
    <property type="match status" value="1"/>
</dbReference>
<dbReference type="FunFam" id="3.20.20.70:FF:000070">
    <property type="entry name" value="Alpha-galactosidase"/>
    <property type="match status" value="1"/>
</dbReference>
<dbReference type="Gene3D" id="3.20.20.70">
    <property type="entry name" value="Aldolase class I"/>
    <property type="match status" value="1"/>
</dbReference>
<dbReference type="Gene3D" id="2.60.40.1180">
    <property type="entry name" value="Golgi alpha-mannosidase II"/>
    <property type="match status" value="1"/>
</dbReference>
<dbReference type="InterPro" id="IPR013785">
    <property type="entry name" value="Aldolase_TIM"/>
</dbReference>
<dbReference type="InterPro" id="IPR002241">
    <property type="entry name" value="Glyco_hydro_27"/>
</dbReference>
<dbReference type="InterPro" id="IPR000111">
    <property type="entry name" value="Glyco_hydro_27/36_CS"/>
</dbReference>
<dbReference type="InterPro" id="IPR013780">
    <property type="entry name" value="Glyco_hydro_b"/>
</dbReference>
<dbReference type="InterPro" id="IPR017853">
    <property type="entry name" value="Glycoside_hydrolase_SF"/>
</dbReference>
<dbReference type="InterPro" id="IPR035373">
    <property type="entry name" value="Melibiase/NAGA_C"/>
</dbReference>
<dbReference type="PANTHER" id="PTHR11452">
    <property type="entry name" value="ALPHA-GALACTOSIDASE/ALPHA-N-ACETYLGALACTOSAMINIDASE"/>
    <property type="match status" value="1"/>
</dbReference>
<dbReference type="PANTHER" id="PTHR11452:SF25">
    <property type="entry name" value="ALPHA-N-ACETYLGALACTOSAMINIDASE"/>
    <property type="match status" value="1"/>
</dbReference>
<dbReference type="Pfam" id="PF16499">
    <property type="entry name" value="Melibiase_2"/>
    <property type="match status" value="1"/>
</dbReference>
<dbReference type="Pfam" id="PF17450">
    <property type="entry name" value="Melibiase_2_C"/>
    <property type="match status" value="1"/>
</dbReference>
<dbReference type="PRINTS" id="PR00740">
    <property type="entry name" value="GLHYDRLASE27"/>
</dbReference>
<dbReference type="SUPFAM" id="SSF51445">
    <property type="entry name" value="(Trans)glycosidases"/>
    <property type="match status" value="1"/>
</dbReference>
<dbReference type="SUPFAM" id="SSF51011">
    <property type="entry name" value="Glycosyl hydrolase domain"/>
    <property type="match status" value="1"/>
</dbReference>
<dbReference type="PROSITE" id="PS00512">
    <property type="entry name" value="ALPHA_GALACTOSIDASE"/>
    <property type="match status" value="1"/>
</dbReference>
<proteinExistence type="evidence at protein level"/>
<evidence type="ECO:0000250" key="1"/>
<evidence type="ECO:0000250" key="2">
    <source>
        <dbReference type="UniProtKB" id="P17050"/>
    </source>
</evidence>
<evidence type="ECO:0000255" key="3"/>
<evidence type="ECO:0000305" key="4"/>
<feature type="signal peptide" evidence="1">
    <location>
        <begin position="1"/>
        <end position="17"/>
    </location>
</feature>
<feature type="chain" id="PRO_0000001019" description="Alpha-N-acetylgalactosaminidase">
    <location>
        <begin position="18"/>
        <end position="415"/>
    </location>
</feature>
<feature type="active site" description="Nucleophile" evidence="1">
    <location>
        <position position="156"/>
    </location>
</feature>
<feature type="active site" description="Proton donor" evidence="1">
    <location>
        <position position="217"/>
    </location>
</feature>
<feature type="binding site" evidence="1">
    <location>
        <begin position="78"/>
        <end position="79"/>
    </location>
    <ligand>
        <name>substrate</name>
    </ligand>
</feature>
<feature type="binding site" evidence="1">
    <location>
        <position position="154"/>
    </location>
    <ligand>
        <name>substrate</name>
    </ligand>
</feature>
<feature type="binding site" evidence="1">
    <location>
        <position position="188"/>
    </location>
    <ligand>
        <name>substrate</name>
    </ligand>
</feature>
<feature type="binding site" evidence="1">
    <location>
        <position position="213"/>
    </location>
    <ligand>
        <name>substrate</name>
    </ligand>
</feature>
<feature type="binding site" evidence="1">
    <location>
        <position position="217"/>
    </location>
    <ligand>
        <name>substrate</name>
    </ligand>
</feature>
<feature type="modified residue" description="Phosphoserine" evidence="2">
    <location>
        <position position="322"/>
    </location>
</feature>
<feature type="modified residue" description="Phosphoserine" evidence="2">
    <location>
        <position position="332"/>
    </location>
</feature>
<feature type="glycosylation site" description="N-linked (GlcNAc...) asparagine" evidence="3">
    <location>
        <position position="177"/>
    </location>
</feature>
<feature type="glycosylation site" description="N-linked (GlcNAc...) asparagine" evidence="3">
    <location>
        <position position="201"/>
    </location>
</feature>
<feature type="glycosylation site" description="N-linked (GlcNAc...) asparagine" evidence="3">
    <location>
        <position position="385"/>
    </location>
</feature>
<feature type="disulfide bond" evidence="1">
    <location>
        <begin position="38"/>
        <end position="80"/>
    </location>
</feature>
<feature type="disulfide bond" evidence="1">
    <location>
        <begin position="42"/>
        <end position="49"/>
    </location>
</feature>
<feature type="disulfide bond" evidence="1">
    <location>
        <begin position="127"/>
        <end position="158"/>
    </location>
</feature>
<feature type="disulfide bond" evidence="1">
    <location>
        <begin position="187"/>
        <end position="209"/>
    </location>
</feature>
<feature type="sequence conflict" description="In Ref. 2; CAA11703." evidence="4" ref="2">
    <original>ER</original>
    <variation>DG</variation>
    <location>
        <begin position="52"/>
        <end position="53"/>
    </location>
</feature>
<feature type="sequence conflict" description="In Ref. 5; AAH21631." evidence="4" ref="5">
    <original>L</original>
    <variation>P</variation>
    <location>
        <position position="239"/>
    </location>
</feature>
<comment type="function">
    <text evidence="2">Removes terminal alpha-N-acetylgalactosamine residues from glycolipids and glycopeptides. Required for the breakdown of glycolipids.</text>
</comment>
<comment type="catalytic activity">
    <reaction>
        <text>Cleavage of non-reducing alpha-(1-&gt;3)-N-acetylgalactosamine residues from human blood group A and AB mucin glycoproteins, Forssman hapten and blood group A lacto series glycolipids.</text>
        <dbReference type="EC" id="3.2.1.49"/>
    </reaction>
</comment>
<comment type="catalytic activity">
    <reaction evidence="2">
        <text>a neolactoside IV(3)-alpha-GalNAc,IV(2)-alpha-Fuc-nLc4Cer(d18:1(4E)) + H2O = a neolactoside IV(2)-alpha-Fuc-nLc4Cer(d18:1(4E)) + N-acetyl-alpha-D-galactosamine</text>
        <dbReference type="Rhea" id="RHEA:48212"/>
        <dbReference type="ChEBI" id="CHEBI:15377"/>
        <dbReference type="ChEBI" id="CHEBI:28471"/>
        <dbReference type="ChEBI" id="CHEBI:28691"/>
        <dbReference type="ChEBI" id="CHEBI:40356"/>
    </reaction>
    <physiologicalReaction direction="left-to-right" evidence="2">
        <dbReference type="Rhea" id="RHEA:48213"/>
    </physiologicalReaction>
</comment>
<comment type="catalytic activity">
    <reaction evidence="2">
        <text>a neolactoside IV(3)-alpha-GalNAc,IV(2)-alpha-Fuc-nLc4Cer(d18:0) + H2O = a neolactoside IV(2)-alpha-Fuc-nLc4Cer(d18:0) + N-acetyl-alpha-D-galactosamine</text>
        <dbReference type="Rhea" id="RHEA:49304"/>
        <dbReference type="ChEBI" id="CHEBI:15377"/>
        <dbReference type="ChEBI" id="CHEBI:40356"/>
        <dbReference type="ChEBI" id="CHEBI:91118"/>
        <dbReference type="ChEBI" id="CHEBI:91119"/>
    </reaction>
    <physiologicalReaction direction="left-to-right" evidence="2">
        <dbReference type="Rhea" id="RHEA:49305"/>
    </physiologicalReaction>
</comment>
<comment type="catalytic activity">
    <reaction evidence="2">
        <text>a globoside IV3GalNAc-Gb4Cer + H2O = N-acetyl-alpha-D-galactosamine + a globoside Gb4Cer</text>
        <dbReference type="Rhea" id="RHEA:48412"/>
        <dbReference type="ChEBI" id="CHEBI:15377"/>
        <dbReference type="ChEBI" id="CHEBI:40356"/>
        <dbReference type="ChEBI" id="CHEBI:88167"/>
        <dbReference type="ChEBI" id="CHEBI:90400"/>
    </reaction>
    <physiologicalReaction direction="left-to-right" evidence="2">
        <dbReference type="Rhea" id="RHEA:48413"/>
    </physiologicalReaction>
</comment>
<comment type="subunit">
    <text evidence="2">Homodimer.</text>
</comment>
<comment type="subcellular location">
    <subcellularLocation>
        <location evidence="2">Lysosome</location>
    </subcellularLocation>
</comment>
<comment type="similarity">
    <text evidence="4">Belongs to the glycosyl hydrolase 27 family.</text>
</comment>
<comment type="sequence caution" evidence="4">
    <conflict type="erroneous initiation">
        <sequence resource="EMBL-CDS" id="AAL87527"/>
    </conflict>
    <text>Extended N-terminus.</text>
</comment>